<sequence length="643" mass="70256">MSFSAAPTESFDVIVVGGGHAGCEAAITAARLGLNTALFSLNLDRIAWQPCNPAVGGPAKSQLVHEVDALGGVIGRLADATAIQKRILNASRGPAVWALRAQTDKRLYSRQMLQLLQHTPNLALREAMVTGLETTVAGDQQRISGIRTYFGSVYGADAVILTAGTFLGGRIWVGHQSMAAGRAGEQAAEGLTETLQELGFQTDRLKTGTPARVDRRSIALDQLEEQPSDAADRFFSFDPAAWVSGEQMSCHITRTTAETHQLIRDNLHLTAIYGGVIDSKGPRYCPSIEDKIVRFADKDSHQIFLEPEGRDTPEIYVQGFSTGLPEPIQLQLLRSLPGLEQAVMLRPAYSVDYDYLPATQLKPSLETKRVRGLFSAGQLNGTTGYEEAAAQGLVAGVNAGRLIGGQEPVHFPREGSYIGTMIDDLVSKDLREPYRVLTSRSEYRLILRGDNADRRLTPLGHELGLIDDRRWQLFEDKLQAMEGEKQRLETVRLKVSDPVAPAVEQETGAAIKGSITLADLLRRPGMHAADLVRHGLADADLPLPVREGAEIDIKYSGYLQRQQQQIDQVKRQSQRKLPADLNYAGIGTLSNEAREKLTAIQPSTLGQASRIPGVSKADITALLMWLELQQRERQPLAPTAEAR</sequence>
<dbReference type="EMBL" id="CP000110">
    <property type="protein sequence ID" value="ABB36273.1"/>
    <property type="molecule type" value="Genomic_DNA"/>
</dbReference>
<dbReference type="RefSeq" id="WP_011365468.1">
    <property type="nucleotide sequence ID" value="NC_007516.1"/>
</dbReference>
<dbReference type="SMR" id="Q3AGK9"/>
<dbReference type="STRING" id="110662.Syncc9605_2545"/>
<dbReference type="KEGG" id="syd:Syncc9605_2545"/>
<dbReference type="eggNOG" id="COG0445">
    <property type="taxonomic scope" value="Bacteria"/>
</dbReference>
<dbReference type="HOGENOM" id="CLU_007831_2_2_3"/>
<dbReference type="OrthoDB" id="9815560at2"/>
<dbReference type="GO" id="GO:0005737">
    <property type="term" value="C:cytoplasm"/>
    <property type="evidence" value="ECO:0007669"/>
    <property type="project" value="UniProtKB-SubCell"/>
</dbReference>
<dbReference type="GO" id="GO:0050660">
    <property type="term" value="F:flavin adenine dinucleotide binding"/>
    <property type="evidence" value="ECO:0007669"/>
    <property type="project" value="UniProtKB-UniRule"/>
</dbReference>
<dbReference type="GO" id="GO:0030488">
    <property type="term" value="P:tRNA methylation"/>
    <property type="evidence" value="ECO:0007669"/>
    <property type="project" value="TreeGrafter"/>
</dbReference>
<dbReference type="GO" id="GO:0002098">
    <property type="term" value="P:tRNA wobble uridine modification"/>
    <property type="evidence" value="ECO:0007669"/>
    <property type="project" value="InterPro"/>
</dbReference>
<dbReference type="FunFam" id="1.10.10.1800:FF:000001">
    <property type="entry name" value="tRNA uridine 5-carboxymethylaminomethyl modification enzyme MnmG"/>
    <property type="match status" value="1"/>
</dbReference>
<dbReference type="FunFam" id="1.10.150.570:FF:000001">
    <property type="entry name" value="tRNA uridine 5-carboxymethylaminomethyl modification enzyme MnmG"/>
    <property type="match status" value="1"/>
</dbReference>
<dbReference type="FunFam" id="3.50.50.60:FF:000002">
    <property type="entry name" value="tRNA uridine 5-carboxymethylaminomethyl modification enzyme MnmG"/>
    <property type="match status" value="1"/>
</dbReference>
<dbReference type="FunFam" id="3.50.50.60:FF:000119">
    <property type="entry name" value="tRNA uridine 5-carboxymethylaminomethyl modification enzyme MnmG"/>
    <property type="match status" value="1"/>
</dbReference>
<dbReference type="Gene3D" id="3.50.50.60">
    <property type="entry name" value="FAD/NAD(P)-binding domain"/>
    <property type="match status" value="2"/>
</dbReference>
<dbReference type="Gene3D" id="1.10.150.570">
    <property type="entry name" value="GidA associated domain, C-terminal subdomain"/>
    <property type="match status" value="1"/>
</dbReference>
<dbReference type="Gene3D" id="1.10.10.1800">
    <property type="entry name" value="tRNA uridine 5-carboxymethylaminomethyl modification enzyme MnmG/GidA"/>
    <property type="match status" value="1"/>
</dbReference>
<dbReference type="HAMAP" id="MF_00129">
    <property type="entry name" value="MnmG_GidA"/>
    <property type="match status" value="1"/>
</dbReference>
<dbReference type="InterPro" id="IPR036188">
    <property type="entry name" value="FAD/NAD-bd_sf"/>
</dbReference>
<dbReference type="InterPro" id="IPR049312">
    <property type="entry name" value="GIDA_C_N"/>
</dbReference>
<dbReference type="InterPro" id="IPR004416">
    <property type="entry name" value="MnmG"/>
</dbReference>
<dbReference type="InterPro" id="IPR002218">
    <property type="entry name" value="MnmG-rel"/>
</dbReference>
<dbReference type="InterPro" id="IPR020595">
    <property type="entry name" value="MnmG-rel_CS"/>
</dbReference>
<dbReference type="InterPro" id="IPR026904">
    <property type="entry name" value="MnmG_C"/>
</dbReference>
<dbReference type="InterPro" id="IPR047001">
    <property type="entry name" value="MnmG_C_subdom"/>
</dbReference>
<dbReference type="InterPro" id="IPR044920">
    <property type="entry name" value="MnmG_C_subdom_sf"/>
</dbReference>
<dbReference type="InterPro" id="IPR040131">
    <property type="entry name" value="MnmG_N"/>
</dbReference>
<dbReference type="NCBIfam" id="TIGR00136">
    <property type="entry name" value="mnmG_gidA"/>
    <property type="match status" value="1"/>
</dbReference>
<dbReference type="PANTHER" id="PTHR11806">
    <property type="entry name" value="GLUCOSE INHIBITED DIVISION PROTEIN A"/>
    <property type="match status" value="1"/>
</dbReference>
<dbReference type="PANTHER" id="PTHR11806:SF0">
    <property type="entry name" value="PROTEIN MTO1 HOMOLOG, MITOCHONDRIAL"/>
    <property type="match status" value="1"/>
</dbReference>
<dbReference type="Pfam" id="PF01134">
    <property type="entry name" value="GIDA"/>
    <property type="match status" value="1"/>
</dbReference>
<dbReference type="Pfam" id="PF21680">
    <property type="entry name" value="GIDA_C_1st"/>
    <property type="match status" value="1"/>
</dbReference>
<dbReference type="Pfam" id="PF13932">
    <property type="entry name" value="SAM_GIDA_C"/>
    <property type="match status" value="1"/>
</dbReference>
<dbReference type="SMART" id="SM01228">
    <property type="entry name" value="GIDA_assoc_3"/>
    <property type="match status" value="1"/>
</dbReference>
<dbReference type="SUPFAM" id="SSF51905">
    <property type="entry name" value="FAD/NAD(P)-binding domain"/>
    <property type="match status" value="1"/>
</dbReference>
<dbReference type="PROSITE" id="PS01280">
    <property type="entry name" value="GIDA_1"/>
    <property type="match status" value="1"/>
</dbReference>
<dbReference type="PROSITE" id="PS01281">
    <property type="entry name" value="GIDA_2"/>
    <property type="match status" value="1"/>
</dbReference>
<proteinExistence type="inferred from homology"/>
<accession>Q3AGK9</accession>
<reference key="1">
    <citation type="submission" date="2005-07" db="EMBL/GenBank/DDBJ databases">
        <title>Complete sequence of Synechococcus sp. CC9605.</title>
        <authorList>
            <consortium name="US DOE Joint Genome Institute"/>
            <person name="Copeland A."/>
            <person name="Lucas S."/>
            <person name="Lapidus A."/>
            <person name="Barry K."/>
            <person name="Detter J.C."/>
            <person name="Glavina T."/>
            <person name="Hammon N."/>
            <person name="Israni S."/>
            <person name="Pitluck S."/>
            <person name="Schmutz J."/>
            <person name="Martinez M."/>
            <person name="Larimer F."/>
            <person name="Land M."/>
            <person name="Kyrpides N."/>
            <person name="Ivanova N."/>
            <person name="Richardson P."/>
        </authorList>
    </citation>
    <scope>NUCLEOTIDE SEQUENCE [LARGE SCALE GENOMIC DNA]</scope>
    <source>
        <strain>CC9605</strain>
    </source>
</reference>
<protein>
    <recommendedName>
        <fullName evidence="1">tRNA uridine 5-carboxymethylaminomethyl modification enzyme MnmG</fullName>
    </recommendedName>
    <alternativeName>
        <fullName evidence="1">Glucose-inhibited division protein A</fullName>
    </alternativeName>
</protein>
<evidence type="ECO:0000255" key="1">
    <source>
        <dbReference type="HAMAP-Rule" id="MF_00129"/>
    </source>
</evidence>
<keyword id="KW-0963">Cytoplasm</keyword>
<keyword id="KW-0274">FAD</keyword>
<keyword id="KW-0285">Flavoprotein</keyword>
<keyword id="KW-0520">NAD</keyword>
<keyword id="KW-0819">tRNA processing</keyword>
<feature type="chain" id="PRO_1000016703" description="tRNA uridine 5-carboxymethylaminomethyl modification enzyme MnmG">
    <location>
        <begin position="1"/>
        <end position="643"/>
    </location>
</feature>
<feature type="binding site" evidence="1">
    <location>
        <begin position="17"/>
        <end position="22"/>
    </location>
    <ligand>
        <name>FAD</name>
        <dbReference type="ChEBI" id="CHEBI:57692"/>
    </ligand>
</feature>
<feature type="binding site" evidence="1">
    <location>
        <begin position="281"/>
        <end position="295"/>
    </location>
    <ligand>
        <name>NAD(+)</name>
        <dbReference type="ChEBI" id="CHEBI:57540"/>
    </ligand>
</feature>
<gene>
    <name evidence="1" type="primary">mnmG</name>
    <name evidence="1" type="synonym">gidA</name>
    <name type="ordered locus">Syncc9605_2545</name>
</gene>
<organism>
    <name type="scientific">Synechococcus sp. (strain CC9605)</name>
    <dbReference type="NCBI Taxonomy" id="110662"/>
    <lineage>
        <taxon>Bacteria</taxon>
        <taxon>Bacillati</taxon>
        <taxon>Cyanobacteriota</taxon>
        <taxon>Cyanophyceae</taxon>
        <taxon>Synechococcales</taxon>
        <taxon>Synechococcaceae</taxon>
        <taxon>Synechococcus</taxon>
    </lineage>
</organism>
<comment type="function">
    <text evidence="1">NAD-binding protein involved in the addition of a carboxymethylaminomethyl (cmnm) group at the wobble position (U34) of certain tRNAs, forming tRNA-cmnm(5)s(2)U34.</text>
</comment>
<comment type="cofactor">
    <cofactor evidence="1">
        <name>FAD</name>
        <dbReference type="ChEBI" id="CHEBI:57692"/>
    </cofactor>
</comment>
<comment type="subunit">
    <text evidence="1">Homodimer. Heterotetramer of two MnmE and two MnmG subunits.</text>
</comment>
<comment type="subcellular location">
    <subcellularLocation>
        <location evidence="1">Cytoplasm</location>
    </subcellularLocation>
</comment>
<comment type="similarity">
    <text evidence="1">Belongs to the MnmG family.</text>
</comment>
<name>MNMG_SYNSC</name>